<feature type="signal peptide" evidence="2">
    <location>
        <begin position="1"/>
        <end position="28"/>
    </location>
</feature>
<feature type="chain" id="PRO_0000379745" description="Defensin-like protein 285">
    <location>
        <begin position="29"/>
        <end position="102"/>
    </location>
</feature>
<feature type="disulfide bond" evidence="1">
    <location>
        <begin position="39"/>
        <end position="100"/>
    </location>
</feature>
<feature type="disulfide bond" evidence="1">
    <location>
        <begin position="64"/>
        <end position="83"/>
    </location>
</feature>
<feature type="disulfide bond" evidence="1">
    <location>
        <begin position="70"/>
        <end position="88"/>
    </location>
</feature>
<feature type="disulfide bond" evidence="1">
    <location>
        <begin position="75"/>
        <end position="90"/>
    </location>
</feature>
<keyword id="KW-0929">Antimicrobial</keyword>
<keyword id="KW-1015">Disulfide bond</keyword>
<keyword id="KW-0295">Fungicide</keyword>
<keyword id="KW-0611">Plant defense</keyword>
<keyword id="KW-1185">Reference proteome</keyword>
<keyword id="KW-0964">Secreted</keyword>
<keyword id="KW-0732">Signal</keyword>
<comment type="subcellular location">
    <subcellularLocation>
        <location evidence="1">Secreted</location>
    </subcellularLocation>
</comment>
<comment type="similarity">
    <text evidence="3">Belongs to the DEFL family.</text>
</comment>
<gene>
    <name type="ordered locus">At5g44973</name>
    <name type="ORF">K21C13</name>
</gene>
<protein>
    <recommendedName>
        <fullName>Defensin-like protein 285</fullName>
    </recommendedName>
</protein>
<accession>Q2V315</accession>
<accession>F4KBR3</accession>
<sequence length="102" mass="11401">MTNLYFKTAFLLSLLLLSFSYQSKLIEAKEDKECNDSKCLPNPSRINLEEGNIKRIDVNHGGICDTYLECGGLACSDYRRACCVNGKCVCRKQGQTLPDCPN</sequence>
<organism>
    <name type="scientific">Arabidopsis thaliana</name>
    <name type="common">Mouse-ear cress</name>
    <dbReference type="NCBI Taxonomy" id="3702"/>
    <lineage>
        <taxon>Eukaryota</taxon>
        <taxon>Viridiplantae</taxon>
        <taxon>Streptophyta</taxon>
        <taxon>Embryophyta</taxon>
        <taxon>Tracheophyta</taxon>
        <taxon>Spermatophyta</taxon>
        <taxon>Magnoliopsida</taxon>
        <taxon>eudicotyledons</taxon>
        <taxon>Gunneridae</taxon>
        <taxon>Pentapetalae</taxon>
        <taxon>rosids</taxon>
        <taxon>malvids</taxon>
        <taxon>Brassicales</taxon>
        <taxon>Brassicaceae</taxon>
        <taxon>Camelineae</taxon>
        <taxon>Arabidopsis</taxon>
    </lineage>
</organism>
<name>DF285_ARATH</name>
<evidence type="ECO:0000250" key="1"/>
<evidence type="ECO:0000255" key="2"/>
<evidence type="ECO:0000305" key="3"/>
<reference key="1">
    <citation type="journal article" date="1998" name="DNA Res.">
        <title>Structural analysis of Arabidopsis thaliana chromosome 5. V. Sequence features of the regions of 1,381,565 bp covered by twenty one physically assigned P1 and TAC clones.</title>
        <authorList>
            <person name="Kaneko T."/>
            <person name="Kotani H."/>
            <person name="Nakamura Y."/>
            <person name="Sato S."/>
            <person name="Asamizu E."/>
            <person name="Miyajima N."/>
            <person name="Tabata S."/>
        </authorList>
    </citation>
    <scope>NUCLEOTIDE SEQUENCE [LARGE SCALE GENOMIC DNA]</scope>
    <source>
        <strain>cv. Columbia</strain>
    </source>
</reference>
<reference key="2">
    <citation type="journal article" date="2017" name="Plant J.">
        <title>Araport11: a complete reannotation of the Arabidopsis thaliana reference genome.</title>
        <authorList>
            <person name="Cheng C.Y."/>
            <person name="Krishnakumar V."/>
            <person name="Chan A.P."/>
            <person name="Thibaud-Nissen F."/>
            <person name="Schobel S."/>
            <person name="Town C.D."/>
        </authorList>
    </citation>
    <scope>GENOME REANNOTATION</scope>
    <source>
        <strain>cv. Columbia</strain>
    </source>
</reference>
<reference key="3">
    <citation type="journal article" date="2007" name="Plant J.">
        <title>Small cysteine-rich peptides resembling antimicrobial peptides have been under-predicted in plants.</title>
        <authorList>
            <person name="Silverstein K.A.T."/>
            <person name="Moskal W.A. Jr."/>
            <person name="Wu H.C."/>
            <person name="Underwood B.A."/>
            <person name="Graham M.A."/>
            <person name="Town C.D."/>
            <person name="VandenBosch K.A."/>
        </authorList>
    </citation>
    <scope>NUCLEOTIDE SEQUENCE [LARGE SCALE MRNA] OF 65-102</scope>
    <source>
        <strain>cv. Columbia</strain>
    </source>
</reference>
<reference key="4">
    <citation type="journal article" date="2005" name="Plant Physiol.">
        <title>Genome organization of more than 300 defensin-like genes in Arabidopsis.</title>
        <authorList>
            <person name="Silverstein K.A.T."/>
            <person name="Graham M.A."/>
            <person name="Paape T.D."/>
            <person name="VandenBosch K.A."/>
        </authorList>
    </citation>
    <scope>GENE FAMILY</scope>
</reference>
<proteinExistence type="inferred from homology"/>
<dbReference type="EMBL" id="AB010693">
    <property type="status" value="NOT_ANNOTATED_CDS"/>
    <property type="molecule type" value="Genomic_DNA"/>
</dbReference>
<dbReference type="EMBL" id="CP002688">
    <property type="protein sequence ID" value="AED95182.1"/>
    <property type="molecule type" value="Genomic_DNA"/>
</dbReference>
<dbReference type="EMBL" id="EF182855">
    <property type="status" value="NOT_ANNOTATED_CDS"/>
    <property type="molecule type" value="mRNA"/>
</dbReference>
<dbReference type="RefSeq" id="NP_001032012.2">
    <property type="nucleotide sequence ID" value="NM_001036935.4"/>
</dbReference>
<dbReference type="STRING" id="3702.Q2V315"/>
<dbReference type="PaxDb" id="3702-AT5G44973.1"/>
<dbReference type="ProteomicsDB" id="224092"/>
<dbReference type="EnsemblPlants" id="AT5G44973.1">
    <property type="protein sequence ID" value="AT5G44973.1"/>
    <property type="gene ID" value="AT5G44973"/>
</dbReference>
<dbReference type="GeneID" id="3771434"/>
<dbReference type="Gramene" id="AT5G44973.1">
    <property type="protein sequence ID" value="AT5G44973.1"/>
    <property type="gene ID" value="AT5G44973"/>
</dbReference>
<dbReference type="KEGG" id="ath:AT5G44973"/>
<dbReference type="Araport" id="AT5G44973"/>
<dbReference type="TAIR" id="AT5G44973"/>
<dbReference type="HOGENOM" id="CLU_179564_0_0_1"/>
<dbReference type="InParanoid" id="Q2V315"/>
<dbReference type="OMA" id="DYRRACC"/>
<dbReference type="PRO" id="PR:Q2V315"/>
<dbReference type="Proteomes" id="UP000006548">
    <property type="component" value="Chromosome 5"/>
</dbReference>
<dbReference type="ExpressionAtlas" id="Q2V315">
    <property type="expression patterns" value="baseline and differential"/>
</dbReference>
<dbReference type="GO" id="GO:0005576">
    <property type="term" value="C:extracellular region"/>
    <property type="evidence" value="ECO:0007669"/>
    <property type="project" value="UniProtKB-SubCell"/>
</dbReference>
<dbReference type="GO" id="GO:0050832">
    <property type="term" value="P:defense response to fungus"/>
    <property type="evidence" value="ECO:0007669"/>
    <property type="project" value="UniProtKB-KW"/>
</dbReference>
<dbReference type="GO" id="GO:0031640">
    <property type="term" value="P:killing of cells of another organism"/>
    <property type="evidence" value="ECO:0007669"/>
    <property type="project" value="UniProtKB-KW"/>
</dbReference>